<proteinExistence type="inferred from homology"/>
<name>YFDV_SHIFL</name>
<dbReference type="EMBL" id="AE005674">
    <property type="protein sequence ID" value="AAN43950.1"/>
    <property type="molecule type" value="Genomic_DNA"/>
</dbReference>
<dbReference type="EMBL" id="AE014073">
    <property type="status" value="NOT_ANNOTATED_CDS"/>
    <property type="molecule type" value="Genomic_DNA"/>
</dbReference>
<dbReference type="RefSeq" id="NP_708243.1">
    <property type="nucleotide sequence ID" value="NC_004337.2"/>
</dbReference>
<dbReference type="RefSeq" id="WP_000955028.1">
    <property type="nucleotide sequence ID" value="NZ_WPGW01000169.1"/>
</dbReference>
<dbReference type="SMR" id="P0AA52"/>
<dbReference type="STRING" id="198214.SF2439"/>
<dbReference type="PaxDb" id="198214-SF2439"/>
<dbReference type="GeneID" id="1027222"/>
<dbReference type="GeneID" id="93774757"/>
<dbReference type="KEGG" id="sfl:SF2439"/>
<dbReference type="PATRIC" id="fig|198214.7.peg.2913"/>
<dbReference type="HOGENOM" id="CLU_056175_0_0_6"/>
<dbReference type="Proteomes" id="UP000001006">
    <property type="component" value="Chromosome"/>
</dbReference>
<dbReference type="Proteomes" id="UP000002673">
    <property type="component" value="Chromosome"/>
</dbReference>
<dbReference type="GO" id="GO:0005886">
    <property type="term" value="C:plasma membrane"/>
    <property type="evidence" value="ECO:0007669"/>
    <property type="project" value="UniProtKB-SubCell"/>
</dbReference>
<dbReference type="GO" id="GO:0055085">
    <property type="term" value="P:transmembrane transport"/>
    <property type="evidence" value="ECO:0007669"/>
    <property type="project" value="InterPro"/>
</dbReference>
<dbReference type="FunFam" id="1.20.1530.20:FF:000006">
    <property type="entry name" value="Putative transporter YfdV"/>
    <property type="match status" value="1"/>
</dbReference>
<dbReference type="Gene3D" id="1.20.1530.20">
    <property type="match status" value="1"/>
</dbReference>
<dbReference type="InterPro" id="IPR004776">
    <property type="entry name" value="Mem_transp_PIN-like"/>
</dbReference>
<dbReference type="InterPro" id="IPR038770">
    <property type="entry name" value="Na+/solute_symporter_sf"/>
</dbReference>
<dbReference type="NCBIfam" id="NF007384">
    <property type="entry name" value="PRK09903.1"/>
    <property type="match status" value="1"/>
</dbReference>
<dbReference type="PANTHER" id="PTHR36838">
    <property type="entry name" value="AUXIN EFFLUX CARRIER FAMILY PROTEIN"/>
    <property type="match status" value="1"/>
</dbReference>
<dbReference type="PANTHER" id="PTHR36838:SF1">
    <property type="entry name" value="SLR1864 PROTEIN"/>
    <property type="match status" value="1"/>
</dbReference>
<dbReference type="Pfam" id="PF03547">
    <property type="entry name" value="Mem_trans"/>
    <property type="match status" value="1"/>
</dbReference>
<organism>
    <name type="scientific">Shigella flexneri</name>
    <dbReference type="NCBI Taxonomy" id="623"/>
    <lineage>
        <taxon>Bacteria</taxon>
        <taxon>Pseudomonadati</taxon>
        <taxon>Pseudomonadota</taxon>
        <taxon>Gammaproteobacteria</taxon>
        <taxon>Enterobacterales</taxon>
        <taxon>Enterobacteriaceae</taxon>
        <taxon>Shigella</taxon>
    </lineage>
</organism>
<sequence>MLTFFIGDLLPIIVIMLLGYFSGRRETFSEDQARAFNKLVLNYALPAALFVSITRANREMIFADTRLTLVSLVVIVGCFFFSWFGCYKFFKRTHAEAAVCALIAGSPTIGFLGFAVLDPIYGDSVSTGLVVAIISIIVNAITIPIGLYLLNPSSGADGKKNSNLSALISAAKEPVVWAPVLATILVLVGVKIPAAWDPTFNLIAKANSGVAVFAAGLTLAAHKFEFSAEIAYNTFLKLILMPLALLLVGMACHLNSEHLQMMVLAGALPPAFSGIIIASRFNVYTRTGTASLAVSVLGFVVTAPLWIYVSRLVS</sequence>
<gene>
    <name type="primary">yfdV</name>
    <name type="ordered locus">SF2439</name>
    <name type="ordered locus">S2576</name>
</gene>
<feature type="chain" id="PRO_0000123802" description="Uncharacterized transporter YfdV">
    <location>
        <begin position="1"/>
        <end position="314"/>
    </location>
</feature>
<feature type="transmembrane region" description="Helical" evidence="1">
    <location>
        <begin position="4"/>
        <end position="23"/>
    </location>
</feature>
<feature type="transmembrane region" description="Helical" evidence="1">
    <location>
        <begin position="36"/>
        <end position="53"/>
    </location>
</feature>
<feature type="transmembrane region" description="Helical" evidence="1">
    <location>
        <begin position="68"/>
        <end position="90"/>
    </location>
</feature>
<feature type="transmembrane region" description="Helical" evidence="1">
    <location>
        <begin position="97"/>
        <end position="116"/>
    </location>
</feature>
<feature type="transmembrane region" description="Helical" evidence="1">
    <location>
        <begin position="131"/>
        <end position="153"/>
    </location>
</feature>
<feature type="transmembrane region" description="Helical" evidence="1">
    <location>
        <begin position="174"/>
        <end position="196"/>
    </location>
</feature>
<feature type="transmembrane region" description="Helical" evidence="1">
    <location>
        <begin position="200"/>
        <end position="222"/>
    </location>
</feature>
<feature type="transmembrane region" description="Helical" evidence="1">
    <location>
        <begin position="229"/>
        <end position="251"/>
    </location>
</feature>
<feature type="transmembrane region" description="Helical" evidence="1">
    <location>
        <begin position="261"/>
        <end position="283"/>
    </location>
</feature>
<feature type="transmembrane region" description="Helical" evidence="1">
    <location>
        <begin position="290"/>
        <end position="309"/>
    </location>
</feature>
<evidence type="ECO:0000255" key="1"/>
<evidence type="ECO:0000305" key="2"/>
<reference key="1">
    <citation type="journal article" date="2002" name="Nucleic Acids Res.">
        <title>Genome sequence of Shigella flexneri 2a: insights into pathogenicity through comparison with genomes of Escherichia coli K12 and O157.</title>
        <authorList>
            <person name="Jin Q."/>
            <person name="Yuan Z."/>
            <person name="Xu J."/>
            <person name="Wang Y."/>
            <person name="Shen Y."/>
            <person name="Lu W."/>
            <person name="Wang J."/>
            <person name="Liu H."/>
            <person name="Yang J."/>
            <person name="Yang F."/>
            <person name="Zhang X."/>
            <person name="Zhang J."/>
            <person name="Yang G."/>
            <person name="Wu H."/>
            <person name="Qu D."/>
            <person name="Dong J."/>
            <person name="Sun L."/>
            <person name="Xue Y."/>
            <person name="Zhao A."/>
            <person name="Gao Y."/>
            <person name="Zhu J."/>
            <person name="Kan B."/>
            <person name="Ding K."/>
            <person name="Chen S."/>
            <person name="Cheng H."/>
            <person name="Yao Z."/>
            <person name="He B."/>
            <person name="Chen R."/>
            <person name="Ma D."/>
            <person name="Qiang B."/>
            <person name="Wen Y."/>
            <person name="Hou Y."/>
            <person name="Yu J."/>
        </authorList>
    </citation>
    <scope>NUCLEOTIDE SEQUENCE [LARGE SCALE GENOMIC DNA]</scope>
    <source>
        <strain>301 / Serotype 2a</strain>
    </source>
</reference>
<reference key="2">
    <citation type="journal article" date="2003" name="Infect. Immun.">
        <title>Complete genome sequence and comparative genomics of Shigella flexneri serotype 2a strain 2457T.</title>
        <authorList>
            <person name="Wei J."/>
            <person name="Goldberg M.B."/>
            <person name="Burland V."/>
            <person name="Venkatesan M.M."/>
            <person name="Deng W."/>
            <person name="Fournier G."/>
            <person name="Mayhew G.F."/>
            <person name="Plunkett G. III"/>
            <person name="Rose D.J."/>
            <person name="Darling A."/>
            <person name="Mau B."/>
            <person name="Perna N.T."/>
            <person name="Payne S.M."/>
            <person name="Runyen-Janecky L.J."/>
            <person name="Zhou S."/>
            <person name="Schwartz D.C."/>
            <person name="Blattner F.R."/>
        </authorList>
    </citation>
    <scope>NUCLEOTIDE SEQUENCE [LARGE SCALE GENOMIC DNA]</scope>
    <source>
        <strain>ATCC 700930 / 2457T / Serotype 2a</strain>
    </source>
</reference>
<keyword id="KW-1003">Cell membrane</keyword>
<keyword id="KW-0472">Membrane</keyword>
<keyword id="KW-1185">Reference proteome</keyword>
<keyword id="KW-0812">Transmembrane</keyword>
<keyword id="KW-1133">Transmembrane helix</keyword>
<keyword id="KW-0813">Transport</keyword>
<accession>P0AA52</accession>
<accession>P76519</accession>
<accession>P76947</accession>
<accession>P76948</accession>
<protein>
    <recommendedName>
        <fullName>Uncharacterized transporter YfdV</fullName>
    </recommendedName>
</protein>
<comment type="subcellular location">
    <subcellularLocation>
        <location evidence="2">Cell membrane</location>
        <topology evidence="2">Multi-pass membrane protein</topology>
    </subcellularLocation>
</comment>
<comment type="similarity">
    <text evidence="2">Belongs to the auxin efflux carrier (TC 2.A.69) family.</text>
</comment>
<comment type="sequence caution" evidence="2">
    <conflict type="frameshift">
        <sequence resource="EMBL" id="AE014073"/>
    </conflict>
</comment>